<sequence length="455" mass="50163">MELKNKKVLVIGLAVTGVPLVRVLKQQGAQIIVNDMKSEVDLAETIDAIGHEQIEYILGRHPEELTTLGELDLVVLSPGVPLDIPFIQQIKAQGIEIIGEVELAFRLSRGKIVAITGTNGKTTTTALTGEIFKGAGKNTYVVGNIGVPFIEKALDTTEEDVIVIEVSSFQLESIKEFHPKVGTLLNLTPDHLNRHKTIENYREAKLNLFMNQSLQDYAVLNYDDITSREAGKTLAAQKIYFSRKQILEEGVFVDNQLITIQTKEKRYDVIHIDEIKILGQHNLENALAATAMTFILGVSAEDIAKGLRNFPGVAHRLEFVEEIEGVKYINDSKGTNTDASIKAIEAAQAPIILLAGGQDKGGDFTDFVKAFDGKVKHLLVYGETSDNIYETALHNNFKVVSQVRDLEEAVIRAKGIAQAGDTILLSPACASWDMYPNFEARGQHFKKLVSSLRRS</sequence>
<feature type="chain" id="PRO_1000061449" description="UDP-N-acetylmuramoylalanine--D-glutamate ligase">
    <location>
        <begin position="1"/>
        <end position="455"/>
    </location>
</feature>
<feature type="binding site" evidence="1">
    <location>
        <begin position="117"/>
        <end position="123"/>
    </location>
    <ligand>
        <name>ATP</name>
        <dbReference type="ChEBI" id="CHEBI:30616"/>
    </ligand>
</feature>
<evidence type="ECO:0000255" key="1">
    <source>
        <dbReference type="HAMAP-Rule" id="MF_00639"/>
    </source>
</evidence>
<proteinExistence type="inferred from homology"/>
<organism>
    <name type="scientific">Alkaliphilus metalliredigens (strain QYMF)</name>
    <dbReference type="NCBI Taxonomy" id="293826"/>
    <lineage>
        <taxon>Bacteria</taxon>
        <taxon>Bacillati</taxon>
        <taxon>Bacillota</taxon>
        <taxon>Clostridia</taxon>
        <taxon>Peptostreptococcales</taxon>
        <taxon>Natronincolaceae</taxon>
        <taxon>Alkaliphilus</taxon>
    </lineage>
</organism>
<keyword id="KW-0067">ATP-binding</keyword>
<keyword id="KW-0131">Cell cycle</keyword>
<keyword id="KW-0132">Cell division</keyword>
<keyword id="KW-0133">Cell shape</keyword>
<keyword id="KW-0961">Cell wall biogenesis/degradation</keyword>
<keyword id="KW-0963">Cytoplasm</keyword>
<keyword id="KW-0436">Ligase</keyword>
<keyword id="KW-0547">Nucleotide-binding</keyword>
<keyword id="KW-0573">Peptidoglycan synthesis</keyword>
<keyword id="KW-1185">Reference proteome</keyword>
<name>MURD_ALKMQ</name>
<accession>A6TS63</accession>
<comment type="function">
    <text evidence="1">Cell wall formation. Catalyzes the addition of glutamate to the nucleotide precursor UDP-N-acetylmuramoyl-L-alanine (UMA).</text>
</comment>
<comment type="catalytic activity">
    <reaction evidence="1">
        <text>UDP-N-acetyl-alpha-D-muramoyl-L-alanine + D-glutamate + ATP = UDP-N-acetyl-alpha-D-muramoyl-L-alanyl-D-glutamate + ADP + phosphate + H(+)</text>
        <dbReference type="Rhea" id="RHEA:16429"/>
        <dbReference type="ChEBI" id="CHEBI:15378"/>
        <dbReference type="ChEBI" id="CHEBI:29986"/>
        <dbReference type="ChEBI" id="CHEBI:30616"/>
        <dbReference type="ChEBI" id="CHEBI:43474"/>
        <dbReference type="ChEBI" id="CHEBI:83898"/>
        <dbReference type="ChEBI" id="CHEBI:83900"/>
        <dbReference type="ChEBI" id="CHEBI:456216"/>
        <dbReference type="EC" id="6.3.2.9"/>
    </reaction>
</comment>
<comment type="pathway">
    <text evidence="1">Cell wall biogenesis; peptidoglycan biosynthesis.</text>
</comment>
<comment type="subcellular location">
    <subcellularLocation>
        <location evidence="1">Cytoplasm</location>
    </subcellularLocation>
</comment>
<comment type="similarity">
    <text evidence="1">Belongs to the MurCDEF family.</text>
</comment>
<dbReference type="EC" id="6.3.2.9" evidence="1"/>
<dbReference type="EMBL" id="CP000724">
    <property type="protein sequence ID" value="ABR49031.1"/>
    <property type="molecule type" value="Genomic_DNA"/>
</dbReference>
<dbReference type="RefSeq" id="WP_012063999.1">
    <property type="nucleotide sequence ID" value="NC_009633.1"/>
</dbReference>
<dbReference type="SMR" id="A6TS63"/>
<dbReference type="STRING" id="293826.Amet_2881"/>
<dbReference type="KEGG" id="amt:Amet_2881"/>
<dbReference type="eggNOG" id="COG0771">
    <property type="taxonomic scope" value="Bacteria"/>
</dbReference>
<dbReference type="HOGENOM" id="CLU_032540_0_0_9"/>
<dbReference type="OrthoDB" id="9809796at2"/>
<dbReference type="UniPathway" id="UPA00219"/>
<dbReference type="Proteomes" id="UP000001572">
    <property type="component" value="Chromosome"/>
</dbReference>
<dbReference type="GO" id="GO:0005737">
    <property type="term" value="C:cytoplasm"/>
    <property type="evidence" value="ECO:0007669"/>
    <property type="project" value="UniProtKB-SubCell"/>
</dbReference>
<dbReference type="GO" id="GO:0005524">
    <property type="term" value="F:ATP binding"/>
    <property type="evidence" value="ECO:0007669"/>
    <property type="project" value="UniProtKB-UniRule"/>
</dbReference>
<dbReference type="GO" id="GO:0008764">
    <property type="term" value="F:UDP-N-acetylmuramoylalanine-D-glutamate ligase activity"/>
    <property type="evidence" value="ECO:0007669"/>
    <property type="project" value="UniProtKB-UniRule"/>
</dbReference>
<dbReference type="GO" id="GO:0051301">
    <property type="term" value="P:cell division"/>
    <property type="evidence" value="ECO:0007669"/>
    <property type="project" value="UniProtKB-KW"/>
</dbReference>
<dbReference type="GO" id="GO:0071555">
    <property type="term" value="P:cell wall organization"/>
    <property type="evidence" value="ECO:0007669"/>
    <property type="project" value="UniProtKB-KW"/>
</dbReference>
<dbReference type="GO" id="GO:0009252">
    <property type="term" value="P:peptidoglycan biosynthetic process"/>
    <property type="evidence" value="ECO:0007669"/>
    <property type="project" value="UniProtKB-UniRule"/>
</dbReference>
<dbReference type="GO" id="GO:0008360">
    <property type="term" value="P:regulation of cell shape"/>
    <property type="evidence" value="ECO:0007669"/>
    <property type="project" value="UniProtKB-KW"/>
</dbReference>
<dbReference type="Gene3D" id="3.90.190.20">
    <property type="entry name" value="Mur ligase, C-terminal domain"/>
    <property type="match status" value="1"/>
</dbReference>
<dbReference type="Gene3D" id="3.40.1190.10">
    <property type="entry name" value="Mur-like, catalytic domain"/>
    <property type="match status" value="1"/>
</dbReference>
<dbReference type="Gene3D" id="3.40.50.720">
    <property type="entry name" value="NAD(P)-binding Rossmann-like Domain"/>
    <property type="match status" value="1"/>
</dbReference>
<dbReference type="HAMAP" id="MF_00639">
    <property type="entry name" value="MurD"/>
    <property type="match status" value="1"/>
</dbReference>
<dbReference type="InterPro" id="IPR036565">
    <property type="entry name" value="Mur-like_cat_sf"/>
</dbReference>
<dbReference type="InterPro" id="IPR004101">
    <property type="entry name" value="Mur_ligase_C"/>
</dbReference>
<dbReference type="InterPro" id="IPR036615">
    <property type="entry name" value="Mur_ligase_C_dom_sf"/>
</dbReference>
<dbReference type="InterPro" id="IPR013221">
    <property type="entry name" value="Mur_ligase_cen"/>
</dbReference>
<dbReference type="InterPro" id="IPR005762">
    <property type="entry name" value="MurD"/>
</dbReference>
<dbReference type="NCBIfam" id="TIGR01087">
    <property type="entry name" value="murD"/>
    <property type="match status" value="1"/>
</dbReference>
<dbReference type="PANTHER" id="PTHR43692">
    <property type="entry name" value="UDP-N-ACETYLMURAMOYLALANINE--D-GLUTAMATE LIGASE"/>
    <property type="match status" value="1"/>
</dbReference>
<dbReference type="PANTHER" id="PTHR43692:SF1">
    <property type="entry name" value="UDP-N-ACETYLMURAMOYLALANINE--D-GLUTAMATE LIGASE"/>
    <property type="match status" value="1"/>
</dbReference>
<dbReference type="Pfam" id="PF02875">
    <property type="entry name" value="Mur_ligase_C"/>
    <property type="match status" value="1"/>
</dbReference>
<dbReference type="Pfam" id="PF08245">
    <property type="entry name" value="Mur_ligase_M"/>
    <property type="match status" value="1"/>
</dbReference>
<dbReference type="Pfam" id="PF21799">
    <property type="entry name" value="MurD-like_N"/>
    <property type="match status" value="1"/>
</dbReference>
<dbReference type="SUPFAM" id="SSF51984">
    <property type="entry name" value="MurCD N-terminal domain"/>
    <property type="match status" value="1"/>
</dbReference>
<dbReference type="SUPFAM" id="SSF53623">
    <property type="entry name" value="MurD-like peptide ligases, catalytic domain"/>
    <property type="match status" value="1"/>
</dbReference>
<dbReference type="SUPFAM" id="SSF53244">
    <property type="entry name" value="MurD-like peptide ligases, peptide-binding domain"/>
    <property type="match status" value="1"/>
</dbReference>
<protein>
    <recommendedName>
        <fullName evidence="1">UDP-N-acetylmuramoylalanine--D-glutamate ligase</fullName>
        <ecNumber evidence="1">6.3.2.9</ecNumber>
    </recommendedName>
    <alternativeName>
        <fullName evidence="1">D-glutamic acid-adding enzyme</fullName>
    </alternativeName>
    <alternativeName>
        <fullName evidence="1">UDP-N-acetylmuramoyl-L-alanyl-D-glutamate synthetase</fullName>
    </alternativeName>
</protein>
<reference key="1">
    <citation type="journal article" date="2016" name="Genome Announc.">
        <title>Complete genome sequence of Alkaliphilus metalliredigens strain QYMF, an alkaliphilic and metal-reducing bacterium isolated from borax-contaminated leachate ponds.</title>
        <authorList>
            <person name="Hwang C."/>
            <person name="Copeland A."/>
            <person name="Lucas S."/>
            <person name="Lapidus A."/>
            <person name="Barry K."/>
            <person name="Detter J.C."/>
            <person name="Glavina Del Rio T."/>
            <person name="Hammon N."/>
            <person name="Israni S."/>
            <person name="Dalin E."/>
            <person name="Tice H."/>
            <person name="Pitluck S."/>
            <person name="Chertkov O."/>
            <person name="Brettin T."/>
            <person name="Bruce D."/>
            <person name="Han C."/>
            <person name="Schmutz J."/>
            <person name="Larimer F."/>
            <person name="Land M.L."/>
            <person name="Hauser L."/>
            <person name="Kyrpides N."/>
            <person name="Mikhailova N."/>
            <person name="Ye Q."/>
            <person name="Zhou J."/>
            <person name="Richardson P."/>
            <person name="Fields M.W."/>
        </authorList>
    </citation>
    <scope>NUCLEOTIDE SEQUENCE [LARGE SCALE GENOMIC DNA]</scope>
    <source>
        <strain>QYMF</strain>
    </source>
</reference>
<gene>
    <name evidence="1" type="primary">murD</name>
    <name type="ordered locus">Amet_2881</name>
</gene>